<organism>
    <name type="scientific">Bacillus anthracis (strain CDC 684 / NRRL 3495)</name>
    <dbReference type="NCBI Taxonomy" id="568206"/>
    <lineage>
        <taxon>Bacteria</taxon>
        <taxon>Bacillati</taxon>
        <taxon>Bacillota</taxon>
        <taxon>Bacilli</taxon>
        <taxon>Bacillales</taxon>
        <taxon>Bacillaceae</taxon>
        <taxon>Bacillus</taxon>
        <taxon>Bacillus cereus group</taxon>
    </lineage>
</organism>
<dbReference type="EC" id="2.7.11.32" evidence="1"/>
<dbReference type="EC" id="2.7.4.27" evidence="1"/>
<dbReference type="EMBL" id="CP001215">
    <property type="protein sequence ID" value="ACP12612.1"/>
    <property type="molecule type" value="Genomic_DNA"/>
</dbReference>
<dbReference type="RefSeq" id="WP_000368943.1">
    <property type="nucleotide sequence ID" value="NC_012581.1"/>
</dbReference>
<dbReference type="SMR" id="C3LKX5"/>
<dbReference type="KEGG" id="bah:BAMEG_4558"/>
<dbReference type="HOGENOM" id="CLU_046206_2_1_9"/>
<dbReference type="GO" id="GO:0043531">
    <property type="term" value="F:ADP binding"/>
    <property type="evidence" value="ECO:0007669"/>
    <property type="project" value="UniProtKB-UniRule"/>
</dbReference>
<dbReference type="GO" id="GO:0005524">
    <property type="term" value="F:ATP binding"/>
    <property type="evidence" value="ECO:0007669"/>
    <property type="project" value="InterPro"/>
</dbReference>
<dbReference type="GO" id="GO:0016776">
    <property type="term" value="F:phosphotransferase activity, phosphate group as acceptor"/>
    <property type="evidence" value="ECO:0007669"/>
    <property type="project" value="UniProtKB-UniRule"/>
</dbReference>
<dbReference type="GO" id="GO:0004674">
    <property type="term" value="F:protein serine/threonine kinase activity"/>
    <property type="evidence" value="ECO:0007669"/>
    <property type="project" value="UniProtKB-UniRule"/>
</dbReference>
<dbReference type="HAMAP" id="MF_00921">
    <property type="entry name" value="PDRP"/>
    <property type="match status" value="1"/>
</dbReference>
<dbReference type="InterPro" id="IPR005177">
    <property type="entry name" value="Kinase-pyrophosphorylase"/>
</dbReference>
<dbReference type="InterPro" id="IPR026565">
    <property type="entry name" value="PPDK_reg"/>
</dbReference>
<dbReference type="NCBIfam" id="NF003742">
    <property type="entry name" value="PRK05339.1"/>
    <property type="match status" value="1"/>
</dbReference>
<dbReference type="PANTHER" id="PTHR31756">
    <property type="entry name" value="PYRUVATE, PHOSPHATE DIKINASE REGULATORY PROTEIN 1, CHLOROPLASTIC"/>
    <property type="match status" value="1"/>
</dbReference>
<dbReference type="PANTHER" id="PTHR31756:SF3">
    <property type="entry name" value="PYRUVATE, PHOSPHATE DIKINASE REGULATORY PROTEIN 1, CHLOROPLASTIC"/>
    <property type="match status" value="1"/>
</dbReference>
<dbReference type="Pfam" id="PF03618">
    <property type="entry name" value="Kinase-PPPase"/>
    <property type="match status" value="1"/>
</dbReference>
<gene>
    <name type="ordered locus">BAMEG_4558</name>
</gene>
<protein>
    <recommendedName>
        <fullName evidence="1">Putative pyruvate, phosphate dikinase regulatory protein</fullName>
        <shortName evidence="1">PPDK regulatory protein</shortName>
        <ecNumber evidence="1">2.7.11.32</ecNumber>
        <ecNumber evidence="1">2.7.4.27</ecNumber>
    </recommendedName>
</protein>
<evidence type="ECO:0000255" key="1">
    <source>
        <dbReference type="HAMAP-Rule" id="MF_00921"/>
    </source>
</evidence>
<proteinExistence type="inferred from homology"/>
<sequence length="270" mass="30334">MDNKIVYVVSDSVGETADLVVRAAMGQFPFAPDIRRVPYVEDTGTLKEVISIAKSNQALICFTLVKPDMRQYLVTEAAKEGVEAYDIIGPLIDQIEEITGQVPRYEPGVVRRLDEEYFKKIEAIEFAVKYDDGRDARGILKADIVLIGISRTSKTPLSQYLAHNKRLKVANVPLVPEVDPPEELYQVAKEKCFGLKITPEKLNHIRKERLKSLGLSDGATYANINRIKEEIDHFENVVSKINCQVIDVSNKAIEETANIIVNAVQNQKMF</sequence>
<reference key="1">
    <citation type="submission" date="2008-10" db="EMBL/GenBank/DDBJ databases">
        <title>Genome sequence of Bacillus anthracis str. CDC 684.</title>
        <authorList>
            <person name="Dodson R.J."/>
            <person name="Munk A.C."/>
            <person name="Brettin T."/>
            <person name="Bruce D."/>
            <person name="Detter C."/>
            <person name="Tapia R."/>
            <person name="Han C."/>
            <person name="Sutton G."/>
            <person name="Sims D."/>
        </authorList>
    </citation>
    <scope>NUCLEOTIDE SEQUENCE [LARGE SCALE GENOMIC DNA]</scope>
    <source>
        <strain>CDC 684 / NRRL 3495</strain>
    </source>
</reference>
<name>PDRP_BACAC</name>
<accession>C3LKX5</accession>
<feature type="chain" id="PRO_1000149699" description="Putative pyruvate, phosphate dikinase regulatory protein">
    <location>
        <begin position="1"/>
        <end position="270"/>
    </location>
</feature>
<feature type="binding site" evidence="1">
    <location>
        <begin position="148"/>
        <end position="155"/>
    </location>
    <ligand>
        <name>ADP</name>
        <dbReference type="ChEBI" id="CHEBI:456216"/>
    </ligand>
</feature>
<comment type="function">
    <text evidence="1">Bifunctional serine/threonine kinase and phosphorylase involved in the regulation of the pyruvate, phosphate dikinase (PPDK) by catalyzing its phosphorylation/dephosphorylation.</text>
</comment>
<comment type="catalytic activity">
    <reaction evidence="1">
        <text>N(tele)-phospho-L-histidyl/L-threonyl-[pyruvate, phosphate dikinase] + ADP = N(tele)-phospho-L-histidyl/O-phospho-L-threonyl-[pyruvate, phosphate dikinase] + AMP + H(+)</text>
        <dbReference type="Rhea" id="RHEA:43692"/>
        <dbReference type="Rhea" id="RHEA-COMP:10650"/>
        <dbReference type="Rhea" id="RHEA-COMP:10651"/>
        <dbReference type="ChEBI" id="CHEBI:15378"/>
        <dbReference type="ChEBI" id="CHEBI:30013"/>
        <dbReference type="ChEBI" id="CHEBI:61977"/>
        <dbReference type="ChEBI" id="CHEBI:83586"/>
        <dbReference type="ChEBI" id="CHEBI:456215"/>
        <dbReference type="ChEBI" id="CHEBI:456216"/>
        <dbReference type="EC" id="2.7.11.32"/>
    </reaction>
</comment>
<comment type="catalytic activity">
    <reaction evidence="1">
        <text>N(tele)-phospho-L-histidyl/O-phospho-L-threonyl-[pyruvate, phosphate dikinase] + phosphate + H(+) = N(tele)-phospho-L-histidyl/L-threonyl-[pyruvate, phosphate dikinase] + diphosphate</text>
        <dbReference type="Rhea" id="RHEA:43696"/>
        <dbReference type="Rhea" id="RHEA-COMP:10650"/>
        <dbReference type="Rhea" id="RHEA-COMP:10651"/>
        <dbReference type="ChEBI" id="CHEBI:15378"/>
        <dbReference type="ChEBI" id="CHEBI:30013"/>
        <dbReference type="ChEBI" id="CHEBI:33019"/>
        <dbReference type="ChEBI" id="CHEBI:43474"/>
        <dbReference type="ChEBI" id="CHEBI:61977"/>
        <dbReference type="ChEBI" id="CHEBI:83586"/>
        <dbReference type="EC" id="2.7.4.27"/>
    </reaction>
</comment>
<comment type="similarity">
    <text evidence="1">Belongs to the pyruvate, phosphate/water dikinase regulatory protein family. PDRP subfamily.</text>
</comment>
<keyword id="KW-0418">Kinase</keyword>
<keyword id="KW-0547">Nucleotide-binding</keyword>
<keyword id="KW-0723">Serine/threonine-protein kinase</keyword>
<keyword id="KW-0808">Transferase</keyword>